<protein>
    <recommendedName>
        <fullName evidence="1">DNA helicase/primase complex-associated protein</fullName>
        <shortName evidence="1">HEPA</shortName>
    </recommendedName>
    <alternativeName>
        <fullName evidence="1">Primase-associated factor</fullName>
    </alternativeName>
</protein>
<evidence type="ECO:0000255" key="1">
    <source>
        <dbReference type="HAMAP-Rule" id="MF_04010"/>
    </source>
</evidence>
<dbReference type="EMBL" id="AF206304">
    <property type="protein sequence ID" value="AAF61653.1"/>
    <property type="molecule type" value="Genomic_DNA"/>
</dbReference>
<dbReference type="EMBL" id="DQ008355">
    <property type="protein sequence ID" value="AAY57732.1"/>
    <property type="molecule type" value="Genomic_DNA"/>
</dbReference>
<dbReference type="EMBL" id="DQ008354">
    <property type="protein sequence ID" value="AAY57661.1"/>
    <property type="molecule type" value="Genomic_DNA"/>
</dbReference>
<dbReference type="IntAct" id="Q9J3N6">
    <property type="interactions" value="3"/>
</dbReference>
<dbReference type="MINT" id="Q9J3N6"/>
<dbReference type="ChEMBL" id="CHEMBL4523677"/>
<dbReference type="Proteomes" id="UP000008504">
    <property type="component" value="Genome"/>
</dbReference>
<dbReference type="Proteomes" id="UP000008506">
    <property type="component" value="Genome"/>
</dbReference>
<dbReference type="GO" id="GO:0042025">
    <property type="term" value="C:host cell nucleus"/>
    <property type="evidence" value="ECO:0007669"/>
    <property type="project" value="UniProtKB-SubCell"/>
</dbReference>
<dbReference type="GO" id="GO:0006260">
    <property type="term" value="P:DNA replication"/>
    <property type="evidence" value="ECO:0007669"/>
    <property type="project" value="UniProtKB-KW"/>
</dbReference>
<dbReference type="GO" id="GO:0019079">
    <property type="term" value="P:viral genome replication"/>
    <property type="evidence" value="ECO:0007669"/>
    <property type="project" value="InterPro"/>
</dbReference>
<dbReference type="HAMAP" id="MF_04010">
    <property type="entry name" value="HSV_HEPA"/>
    <property type="match status" value="1"/>
</dbReference>
<dbReference type="InterPro" id="IPR004996">
    <property type="entry name" value="HSV_HEPA"/>
</dbReference>
<dbReference type="Pfam" id="PF03324">
    <property type="entry name" value="Herpes_HEPA"/>
    <property type="match status" value="1"/>
</dbReference>
<comment type="function">
    <text evidence="1">Component of the helicase/primase complex. Unwinds the DNA at the replication forks and generates single-stranded DNA for both leading and lagging strand synthesis. The primase synthesizes short RNA primers on the lagging strand that the polymerase presumably elongates using dNTPs. The primase-associated factor has no known catalytic activity in the complex and may serve to facilitate the formation of the replisome by directly interacting with the origin-binding protein and the polymerase.</text>
</comment>
<comment type="subunit">
    <text evidence="1">Associates with the primase and the helicase to form the helicase-primase complex. Interacts with the origin-binding protein. Interacts with the polymerase catalytic subunit.</text>
</comment>
<comment type="subcellular location">
    <subcellularLocation>
        <location evidence="1">Host nucleus</location>
    </subcellularLocation>
</comment>
<comment type="similarity">
    <text evidence="1">Belongs to the herpesviridae HEPA family.</text>
</comment>
<organism>
    <name type="scientific">Varicella-zoster virus (strain Oka vaccine)</name>
    <name type="common">HHV-3</name>
    <name type="synonym">Human herpesvirus 3</name>
    <dbReference type="NCBI Taxonomy" id="341980"/>
    <lineage>
        <taxon>Viruses</taxon>
        <taxon>Duplodnaviria</taxon>
        <taxon>Heunggongvirae</taxon>
        <taxon>Peploviricota</taxon>
        <taxon>Herviviricetes</taxon>
        <taxon>Herpesvirales</taxon>
        <taxon>Orthoherpesviridae</taxon>
        <taxon>Alphaherpesvirinae</taxon>
        <taxon>Varicellovirus</taxon>
        <taxon>Varicellovirus humanalpha3</taxon>
        <taxon>Human herpesvirus 3</taxon>
    </lineage>
</organism>
<accession>Q9J3N6</accession>
<accession>Q4JQS3</accession>
<accession>Q4JR32</accession>
<sequence>MDATQITLVRESGHICAASIYTSWTQSGQLTQNGLSVLYYLLCKNSCGKYVPKFAEITVQQEDLCRYSRHGGSVSAATFASICRAASSAALDAWPLEPLGNADTWRCLHGTALATLRRVLGFKSFYSPVTFETDTNTGLLLKTIPDEHALNNDNTPSTGVLRANFPVAIDVSAVSACNAHTQGTSLAYARLTALKSNGDTQQQTPLDVEVITPKAYIRRKYKSTFSPPIEREGQTSDLFNLEERRLVLSGNRAIVVRVLLPCYFDCLTTDSTVTSSLSILATYRLWYAAAFGKPGVVRPIFAYLGPELNPKGEDRDYFCTVGFPGWTTLRTQTPAVESIRTATEMYMETDGLWPVTGIQAFHYLAPWGQHPPLPPRVQDLIGQIPQDTGHADATVNWDAGRISTVFKQPVQLQDRWMAKFDFSAFFPTIYCAMFPMHFRLGKIVLARMRRGMGCLKPALVSFFGGLRHILPSIYKAIIFIANEISLCVEQTALEQGFAICTYIKDGFWGIFTDLHTRNVCSDQARCSALNLAAACERAVTGLLRIQLGLNFTPAMEPVLRVEGVYTHAFTWCTTGSWLWNLQTNTPPDLVGVPWRSQAARDLKERLSGLLCTATKIRERIQENCIWDRVLYDIWAGQVVEAARKTYVDFFEHVFDRRYTPVYWSLQEQNSETKAIPASYLTYGHMQDKDYKPRQIIMVRNPNPHGPPTVVYWELLPSCACIPPIDCAAHLKPLIHTFVTIINHLLDAHNDFSSPSLKFTDDPLASYNFLFL</sequence>
<keyword id="KW-0235">DNA replication</keyword>
<keyword id="KW-1048">Host nucleus</keyword>
<reference key="1">
    <citation type="journal article" date="2000" name="J. Infect. Dis.">
        <title>Nucleotide sequences that distinguish Oka vaccine from parental Oka and other varicella-zoster virus isolates.</title>
        <authorList>
            <person name="Argaw T."/>
            <person name="Cohen J.I."/>
            <person name="Klutch M."/>
            <person name="Lekstrom K."/>
            <person name="Yoshikawa T."/>
            <person name="Asano Y."/>
            <person name="Krause P.R."/>
        </authorList>
    </citation>
    <scope>NUCLEOTIDE SEQUENCE [LARGE SCALE GENOMIC DNA]</scope>
    <source>
        <strain>Oka varicella vaccine Biken (V-Oka-Biken)</strain>
    </source>
</reference>
<reference key="2">
    <citation type="journal article" date="2008" name="J. Virol.">
        <title>Complete DNA sequences of two oka strain varicella-zoster virus genomes.</title>
        <authorList>
            <person name="Tillieux S.L."/>
            <person name="Halsey W.S."/>
            <person name="Thomas E.S."/>
            <person name="Voycik J.J."/>
            <person name="Sathe G.M."/>
            <person name="Vassilev V."/>
        </authorList>
    </citation>
    <scope>NUCLEOTIDE SEQUENCE [LARGE SCALE GENOMIC DNA]</scope>
    <source>
        <strain>Oka varicella vaccine VarilRix (V-Oka-GSK)</strain>
        <strain>Oka varicella vaccine Varivax (V-Oka-Merck)</strain>
    </source>
</reference>
<gene>
    <name type="ORF">ORF52</name>
</gene>
<name>HEPA_VZVO</name>
<organismHost>
    <name type="scientific">Homo sapiens</name>
    <name type="common">Human</name>
    <dbReference type="NCBI Taxonomy" id="9606"/>
</organismHost>
<feature type="chain" id="PRO_0000385139" description="DNA helicase/primase complex-associated protein">
    <location>
        <begin position="1"/>
        <end position="771"/>
    </location>
</feature>
<feature type="sequence variant">
    <original>T</original>
    <variation>A</variation>
    <location>
        <position position="512"/>
    </location>
</feature>
<proteinExistence type="inferred from homology"/>